<reference key="1">
    <citation type="journal article" date="2005" name="Genome Res.">
        <title>Complete genome sequence of the hyperthermophilic archaeon Thermococcus kodakaraensis KOD1 and comparison with Pyrococcus genomes.</title>
        <authorList>
            <person name="Fukui T."/>
            <person name="Atomi H."/>
            <person name="Kanai T."/>
            <person name="Matsumi R."/>
            <person name="Fujiwara S."/>
            <person name="Imanaka T."/>
        </authorList>
    </citation>
    <scope>NUCLEOTIDE SEQUENCE [LARGE SCALE GENOMIC DNA]</scope>
    <source>
        <strain>ATCC BAA-918 / JCM 12380 / KOD1</strain>
    </source>
</reference>
<proteinExistence type="inferred from homology"/>
<dbReference type="EMBL" id="AP006878">
    <property type="protein sequence ID" value="BAD86165.1"/>
    <property type="molecule type" value="Genomic_DNA"/>
</dbReference>
<dbReference type="RefSeq" id="WP_011250926.1">
    <property type="nucleotide sequence ID" value="NC_006624.1"/>
</dbReference>
<dbReference type="SMR" id="Q5JGB4"/>
<dbReference type="FunCoup" id="Q5JGB4">
    <property type="interactions" value="72"/>
</dbReference>
<dbReference type="STRING" id="69014.TK1976"/>
<dbReference type="EnsemblBacteria" id="BAD86165">
    <property type="protein sequence ID" value="BAD86165"/>
    <property type="gene ID" value="TK1976"/>
</dbReference>
<dbReference type="GeneID" id="78448511"/>
<dbReference type="KEGG" id="tko:TK1976"/>
<dbReference type="PATRIC" id="fig|69014.16.peg.1931"/>
<dbReference type="eggNOG" id="arCOG00353">
    <property type="taxonomic scope" value="Archaea"/>
</dbReference>
<dbReference type="HOGENOM" id="CLU_019597_2_0_2"/>
<dbReference type="InParanoid" id="Q5JGB4"/>
<dbReference type="OrthoDB" id="10150at2157"/>
<dbReference type="PhylomeDB" id="Q5JGB4"/>
<dbReference type="Proteomes" id="UP000000536">
    <property type="component" value="Chromosome"/>
</dbReference>
<dbReference type="GO" id="GO:0005737">
    <property type="term" value="C:cytoplasm"/>
    <property type="evidence" value="ECO:0000318"/>
    <property type="project" value="GO_Central"/>
</dbReference>
<dbReference type="GO" id="GO:0005525">
    <property type="term" value="F:GTP binding"/>
    <property type="evidence" value="ECO:0007669"/>
    <property type="project" value="UniProtKB-UniRule"/>
</dbReference>
<dbReference type="GO" id="GO:0003924">
    <property type="term" value="F:GTPase activity"/>
    <property type="evidence" value="ECO:0007669"/>
    <property type="project" value="UniProtKB-UniRule"/>
</dbReference>
<dbReference type="GO" id="GO:0046872">
    <property type="term" value="F:metal ion binding"/>
    <property type="evidence" value="ECO:0007669"/>
    <property type="project" value="UniProtKB-KW"/>
</dbReference>
<dbReference type="GO" id="GO:0043022">
    <property type="term" value="F:ribosome binding"/>
    <property type="evidence" value="ECO:0000318"/>
    <property type="project" value="GO_Central"/>
</dbReference>
<dbReference type="CDD" id="cd01878">
    <property type="entry name" value="HflX"/>
    <property type="match status" value="1"/>
</dbReference>
<dbReference type="FunFam" id="3.40.50.11060:FF:000001">
    <property type="entry name" value="GTPase HflX"/>
    <property type="match status" value="1"/>
</dbReference>
<dbReference type="Gene3D" id="6.10.250.2860">
    <property type="match status" value="1"/>
</dbReference>
<dbReference type="Gene3D" id="3.40.50.11060">
    <property type="entry name" value="GTPase HflX, N-terminal domain"/>
    <property type="match status" value="1"/>
</dbReference>
<dbReference type="Gene3D" id="3.40.50.300">
    <property type="entry name" value="P-loop containing nucleotide triphosphate hydrolases"/>
    <property type="match status" value="1"/>
</dbReference>
<dbReference type="HAMAP" id="MF_00900">
    <property type="entry name" value="GTPase_HflX"/>
    <property type="match status" value="1"/>
</dbReference>
<dbReference type="InterPro" id="IPR030394">
    <property type="entry name" value="G_HFLX_dom"/>
</dbReference>
<dbReference type="InterPro" id="IPR006073">
    <property type="entry name" value="GTP-bd"/>
</dbReference>
<dbReference type="InterPro" id="IPR032305">
    <property type="entry name" value="GTP-bd_M"/>
</dbReference>
<dbReference type="InterPro" id="IPR016496">
    <property type="entry name" value="GTPase_HflX"/>
</dbReference>
<dbReference type="InterPro" id="IPR025121">
    <property type="entry name" value="GTPase_HflX_N"/>
</dbReference>
<dbReference type="InterPro" id="IPR042108">
    <property type="entry name" value="GTPase_HflX_N_sf"/>
</dbReference>
<dbReference type="InterPro" id="IPR027417">
    <property type="entry name" value="P-loop_NTPase"/>
</dbReference>
<dbReference type="InterPro" id="IPR005225">
    <property type="entry name" value="Small_GTP-bd"/>
</dbReference>
<dbReference type="NCBIfam" id="TIGR03156">
    <property type="entry name" value="GTP_HflX"/>
    <property type="match status" value="1"/>
</dbReference>
<dbReference type="NCBIfam" id="TIGR00231">
    <property type="entry name" value="small_GTP"/>
    <property type="match status" value="1"/>
</dbReference>
<dbReference type="PANTHER" id="PTHR10229">
    <property type="entry name" value="GTP-BINDING PROTEIN HFLX"/>
    <property type="match status" value="1"/>
</dbReference>
<dbReference type="PANTHER" id="PTHR10229:SF8">
    <property type="entry name" value="GTPASE HFLX"/>
    <property type="match status" value="1"/>
</dbReference>
<dbReference type="Pfam" id="PF16360">
    <property type="entry name" value="GTP-bdg_M"/>
    <property type="match status" value="1"/>
</dbReference>
<dbReference type="Pfam" id="PF13167">
    <property type="entry name" value="GTP-bdg_N"/>
    <property type="match status" value="1"/>
</dbReference>
<dbReference type="Pfam" id="PF01926">
    <property type="entry name" value="MMR_HSR1"/>
    <property type="match status" value="1"/>
</dbReference>
<dbReference type="PIRSF" id="PIRSF006809">
    <property type="entry name" value="GTP-binding_hflX_prd"/>
    <property type="match status" value="1"/>
</dbReference>
<dbReference type="PRINTS" id="PR00326">
    <property type="entry name" value="GTP1OBG"/>
</dbReference>
<dbReference type="SUPFAM" id="SSF52540">
    <property type="entry name" value="P-loop containing nucleoside triphosphate hydrolases"/>
    <property type="match status" value="1"/>
</dbReference>
<dbReference type="PROSITE" id="PS51705">
    <property type="entry name" value="G_HFLX"/>
    <property type="match status" value="1"/>
</dbReference>
<comment type="function">
    <text evidence="1">GTPase that associates with the 50S ribosomal subunit and may have a role during protein synthesis or ribosome biogenesis.</text>
</comment>
<comment type="cofactor">
    <cofactor evidence="1">
        <name>Mg(2+)</name>
        <dbReference type="ChEBI" id="CHEBI:18420"/>
    </cofactor>
</comment>
<comment type="subunit">
    <text evidence="1">Monomer. Associates with the 50S ribosomal subunit.</text>
</comment>
<comment type="subcellular location">
    <subcellularLocation>
        <location evidence="1">Cytoplasm</location>
    </subcellularLocation>
    <text evidence="1">May associate with membranes.</text>
</comment>
<comment type="similarity">
    <text evidence="1">Belongs to the TRAFAC class OBG-HflX-like GTPase superfamily. HflX GTPase family.</text>
</comment>
<organism>
    <name type="scientific">Thermococcus kodakarensis (strain ATCC BAA-918 / JCM 12380 / KOD1)</name>
    <name type="common">Pyrococcus kodakaraensis (strain KOD1)</name>
    <dbReference type="NCBI Taxonomy" id="69014"/>
    <lineage>
        <taxon>Archaea</taxon>
        <taxon>Methanobacteriati</taxon>
        <taxon>Methanobacteriota</taxon>
        <taxon>Thermococci</taxon>
        <taxon>Thermococcales</taxon>
        <taxon>Thermococcaceae</taxon>
        <taxon>Thermococcus</taxon>
    </lineage>
</organism>
<protein>
    <recommendedName>
        <fullName evidence="1">GTPase HflX</fullName>
    </recommendedName>
    <alternativeName>
        <fullName evidence="1">GTP-binding protein HflX</fullName>
    </alternativeName>
</protein>
<accession>Q5JGB4</accession>
<sequence>MRAIGVIRNSRRERLSRAEFEELLRSAGYEVLAIVEQNREEHPRYNIGPGKLEELKELVKELKPDKVIFANRLTPSQAYNLWKELRIEIMDRWQLVLEIFEKRAHSKEAKLQVELASLQYEIPLVKEAIRRIRLGDRAGFKGMGEYQTQQYLKHIRYRMGKIRDELERVKADREVKRKKRENAGFVLVALAGYTNAGKSTLLNALADENVEAKNQMFTTLDTTTRRFRLGTKRILATDTVGFIDGLPPFIVEAFHSTLEEIVKADIVLLVLDSSEPWGEIRRKFLASLQVLRELKALEKPIIVALNKIDLIEEADAEEKVRLIWELARERGISLEDVVKISAREGRLEELMDALNRVVLKLPKYGAFRIIVKEPEKVPAVMALINSVGEVLSVEYGEKTRIDAYVQTGMVGEIKKMGAEIERLNHSGEGEELEQDEGYSDGG</sequence>
<name>HFLX_THEKO</name>
<evidence type="ECO:0000255" key="1">
    <source>
        <dbReference type="HAMAP-Rule" id="MF_00900"/>
    </source>
</evidence>
<keyword id="KW-0963">Cytoplasm</keyword>
<keyword id="KW-0342">GTP-binding</keyword>
<keyword id="KW-0460">Magnesium</keyword>
<keyword id="KW-0479">Metal-binding</keyword>
<keyword id="KW-0547">Nucleotide-binding</keyword>
<keyword id="KW-1185">Reference proteome</keyword>
<gene>
    <name evidence="1" type="primary">hflX</name>
    <name type="ordered locus">TK1976</name>
</gene>
<feature type="chain" id="PRO_0000412667" description="GTPase HflX">
    <location>
        <begin position="1"/>
        <end position="442"/>
    </location>
</feature>
<feature type="domain" description="Hflx-type G" evidence="1">
    <location>
        <begin position="186"/>
        <end position="362"/>
    </location>
</feature>
<feature type="binding site" evidence="1">
    <location>
        <begin position="192"/>
        <end position="199"/>
    </location>
    <ligand>
        <name>GTP</name>
        <dbReference type="ChEBI" id="CHEBI:37565"/>
    </ligand>
</feature>
<feature type="binding site" evidence="1">
    <location>
        <position position="199"/>
    </location>
    <ligand>
        <name>Mg(2+)</name>
        <dbReference type="ChEBI" id="CHEBI:18420"/>
    </ligand>
</feature>
<feature type="binding site" evidence="1">
    <location>
        <begin position="217"/>
        <end position="221"/>
    </location>
    <ligand>
        <name>GTP</name>
        <dbReference type="ChEBI" id="CHEBI:37565"/>
    </ligand>
</feature>
<feature type="binding site" evidence="1">
    <location>
        <position position="219"/>
    </location>
    <ligand>
        <name>Mg(2+)</name>
        <dbReference type="ChEBI" id="CHEBI:18420"/>
    </ligand>
</feature>
<feature type="binding site" evidence="1">
    <location>
        <begin position="238"/>
        <end position="241"/>
    </location>
    <ligand>
        <name>GTP</name>
        <dbReference type="ChEBI" id="CHEBI:37565"/>
    </ligand>
</feature>
<feature type="binding site" evidence="1">
    <location>
        <begin position="306"/>
        <end position="309"/>
    </location>
    <ligand>
        <name>GTP</name>
        <dbReference type="ChEBI" id="CHEBI:37565"/>
    </ligand>
</feature>
<feature type="binding site" evidence="1">
    <location>
        <begin position="341"/>
        <end position="343"/>
    </location>
    <ligand>
        <name>GTP</name>
        <dbReference type="ChEBI" id="CHEBI:37565"/>
    </ligand>
</feature>